<sequence length="220" mass="24997">METDDQYYRAIKKIKEAAEASNRAYLTSSKLADMLGISQQSASRIIIDLEKNGYITRTVTKRGQILNITEKGLDVLYTEFADLSRILAIKNNVVITGTVTSGMGEGRYYVARKQYIIQFQEKLGIIPYLGTLNIKVDQASLPELRKIRGFRGIHIEGFKTEDRTFGSVKAFPAKIQNIPCFVIMPERTVYTDVIEIISDKYLREEINLHDGDRVSVEVYT</sequence>
<comment type="function">
    <text evidence="1">Catalyzes the CTP-dependent phosphorylation of riboflavin (vitamin B2) to form flavin mononucleotide (FMN).</text>
</comment>
<comment type="catalytic activity">
    <reaction>
        <text>riboflavin + CTP = CDP + FMN + H(+)</text>
        <dbReference type="Rhea" id="RHEA:25021"/>
        <dbReference type="ChEBI" id="CHEBI:15378"/>
        <dbReference type="ChEBI" id="CHEBI:37563"/>
        <dbReference type="ChEBI" id="CHEBI:57986"/>
        <dbReference type="ChEBI" id="CHEBI:58069"/>
        <dbReference type="ChEBI" id="CHEBI:58210"/>
        <dbReference type="EC" id="2.7.1.161"/>
    </reaction>
</comment>
<comment type="cofactor">
    <cofactor evidence="1">
        <name>Mg(2+)</name>
        <dbReference type="ChEBI" id="CHEBI:18420"/>
    </cofactor>
    <text evidence="1">Binds 1 Mg(2+) ion per subunit.</text>
</comment>
<comment type="pathway">
    <text>Cofactor biosynthesis; FMN biosynthesis; FMN from riboflavin (CTP route): step 1/1.</text>
</comment>
<comment type="similarity">
    <text evidence="2">Belongs to the archaeal riboflavin kinase family.</text>
</comment>
<keyword id="KW-0002">3D-structure</keyword>
<keyword id="KW-0285">Flavoprotein</keyword>
<keyword id="KW-0288">FMN</keyword>
<keyword id="KW-0418">Kinase</keyword>
<keyword id="KW-0460">Magnesium</keyword>
<keyword id="KW-0479">Metal-binding</keyword>
<keyword id="KW-0547">Nucleotide-binding</keyword>
<keyword id="KW-1185">Reference proteome</keyword>
<keyword id="KW-0808">Transferase</keyword>
<dbReference type="EC" id="2.7.1.161"/>
<dbReference type="EMBL" id="AL445066">
    <property type="protein sequence ID" value="CAC12192.1"/>
    <property type="molecule type" value="Genomic_DNA"/>
</dbReference>
<dbReference type="RefSeq" id="WP_010901475.1">
    <property type="nucleotide sequence ID" value="NC_002578.1"/>
</dbReference>
<dbReference type="PDB" id="3CTA">
    <property type="method" value="X-ray"/>
    <property type="resolution" value="2.20 A"/>
    <property type="chains" value="A=2-220"/>
</dbReference>
<dbReference type="PDB" id="5TRD">
    <property type="method" value="X-ray"/>
    <property type="resolution" value="1.85 A"/>
    <property type="chains" value="A/B=2-220"/>
</dbReference>
<dbReference type="PDBsum" id="3CTA"/>
<dbReference type="PDBsum" id="5TRD"/>
<dbReference type="SMR" id="Q9HJA6"/>
<dbReference type="FunCoup" id="Q9HJA6">
    <property type="interactions" value="2"/>
</dbReference>
<dbReference type="STRING" id="273075.gene:9572285"/>
<dbReference type="PaxDb" id="273075-Ta1064"/>
<dbReference type="EnsemblBacteria" id="CAC12192">
    <property type="protein sequence ID" value="CAC12192"/>
    <property type="gene ID" value="CAC12192"/>
</dbReference>
<dbReference type="KEGG" id="tac:Ta1064"/>
<dbReference type="eggNOG" id="arCOG01904">
    <property type="taxonomic scope" value="Archaea"/>
</dbReference>
<dbReference type="HOGENOM" id="CLU_088476_0_0_2"/>
<dbReference type="InParanoid" id="Q9HJA6"/>
<dbReference type="OrthoDB" id="30955at2157"/>
<dbReference type="BRENDA" id="2.7.1.161">
    <property type="organism ID" value="6324"/>
</dbReference>
<dbReference type="UniPathway" id="UPA00276">
    <property type="reaction ID" value="UER00929"/>
</dbReference>
<dbReference type="EvolutionaryTrace" id="Q9HJA6"/>
<dbReference type="Proteomes" id="UP000001024">
    <property type="component" value="Chromosome"/>
</dbReference>
<dbReference type="GO" id="GO:0003677">
    <property type="term" value="F:DNA binding"/>
    <property type="evidence" value="ECO:0007669"/>
    <property type="project" value="InterPro"/>
</dbReference>
<dbReference type="GO" id="GO:0046872">
    <property type="term" value="F:metal ion binding"/>
    <property type="evidence" value="ECO:0007669"/>
    <property type="project" value="UniProtKB-KW"/>
</dbReference>
<dbReference type="GO" id="GO:0000166">
    <property type="term" value="F:nucleotide binding"/>
    <property type="evidence" value="ECO:0007669"/>
    <property type="project" value="UniProtKB-KW"/>
</dbReference>
<dbReference type="GO" id="GO:0008531">
    <property type="term" value="F:riboflavin kinase activity"/>
    <property type="evidence" value="ECO:0007669"/>
    <property type="project" value="InterPro"/>
</dbReference>
<dbReference type="GO" id="GO:0009398">
    <property type="term" value="P:FMN biosynthetic process"/>
    <property type="evidence" value="ECO:0007669"/>
    <property type="project" value="UniProtKB-UniPathway"/>
</dbReference>
<dbReference type="GO" id="GO:0006355">
    <property type="term" value="P:regulation of DNA-templated transcription"/>
    <property type="evidence" value="ECO:0007669"/>
    <property type="project" value="InterPro"/>
</dbReference>
<dbReference type="GO" id="GO:0009231">
    <property type="term" value="P:riboflavin biosynthetic process"/>
    <property type="evidence" value="ECO:0007669"/>
    <property type="project" value="InterPro"/>
</dbReference>
<dbReference type="Gene3D" id="2.40.30.30">
    <property type="entry name" value="Riboflavin kinase-like"/>
    <property type="match status" value="1"/>
</dbReference>
<dbReference type="Gene3D" id="1.10.10.10">
    <property type="entry name" value="Winged helix-like DNA-binding domain superfamily/Winged helix DNA-binding domain"/>
    <property type="match status" value="1"/>
</dbReference>
<dbReference type="InterPro" id="IPR012318">
    <property type="entry name" value="HTH_CRP"/>
</dbReference>
<dbReference type="InterPro" id="IPR039063">
    <property type="entry name" value="RibK_CTP-dep"/>
</dbReference>
<dbReference type="InterPro" id="IPR023602">
    <property type="entry name" value="Riboflavin_kinase_CTP-dep"/>
</dbReference>
<dbReference type="InterPro" id="IPR023465">
    <property type="entry name" value="Riboflavin_kinase_dom_sf"/>
</dbReference>
<dbReference type="InterPro" id="IPR036388">
    <property type="entry name" value="WH-like_DNA-bd_sf"/>
</dbReference>
<dbReference type="InterPro" id="IPR036390">
    <property type="entry name" value="WH_DNA-bd_sf"/>
</dbReference>
<dbReference type="NCBIfam" id="NF010762">
    <property type="entry name" value="PRK14165.1"/>
    <property type="match status" value="1"/>
</dbReference>
<dbReference type="PANTHER" id="PTHR40706">
    <property type="entry name" value="RIBOFLAVIN KINASE"/>
    <property type="match status" value="1"/>
</dbReference>
<dbReference type="PANTHER" id="PTHR40706:SF1">
    <property type="entry name" value="RIBOFLAVIN KINASE"/>
    <property type="match status" value="1"/>
</dbReference>
<dbReference type="Pfam" id="PF01982">
    <property type="entry name" value="CTP-dep_RFKase"/>
    <property type="match status" value="1"/>
</dbReference>
<dbReference type="Pfam" id="PF13545">
    <property type="entry name" value="HTH_Crp_2"/>
    <property type="match status" value="1"/>
</dbReference>
<dbReference type="SUPFAM" id="SSF82114">
    <property type="entry name" value="Riboflavin kinase-like"/>
    <property type="match status" value="1"/>
</dbReference>
<dbReference type="SUPFAM" id="SSF46785">
    <property type="entry name" value="Winged helix' DNA-binding domain"/>
    <property type="match status" value="1"/>
</dbReference>
<reference key="1">
    <citation type="journal article" date="2000" name="Nature">
        <title>The genome sequence of the thermoacidophilic scavenger Thermoplasma acidophilum.</title>
        <authorList>
            <person name="Ruepp A."/>
            <person name="Graml W."/>
            <person name="Santos-Martinez M.-L."/>
            <person name="Koretke K.K."/>
            <person name="Volker C."/>
            <person name="Mewes H.-W."/>
            <person name="Frishman D."/>
            <person name="Stocker S."/>
            <person name="Lupas A.N."/>
            <person name="Baumeister W."/>
        </authorList>
    </citation>
    <scope>NUCLEOTIDE SEQUENCE [LARGE SCALE GENOMIC DNA]</scope>
    <source>
        <strain>ATCC 25905 / DSM 1728 / JCM 9062 / NBRC 15155 / AMRC-C165</strain>
    </source>
</reference>
<name>RIFK_THEAC</name>
<evidence type="ECO:0000250" key="1"/>
<evidence type="ECO:0000305" key="2"/>
<evidence type="ECO:0007829" key="3">
    <source>
        <dbReference type="PDB" id="5TRD"/>
    </source>
</evidence>
<protein>
    <recommendedName>
        <fullName>Riboflavin kinase</fullName>
        <shortName>RFK</shortName>
        <ecNumber>2.7.1.161</ecNumber>
    </recommendedName>
    <alternativeName>
        <fullName>CTP-dependent riboflavin kinase</fullName>
    </alternativeName>
    <alternativeName>
        <fullName>CTP:riboflavin 5'-phosphotransferase</fullName>
    </alternativeName>
    <alternativeName>
        <fullName>Flavokinase</fullName>
    </alternativeName>
</protein>
<feature type="chain" id="PRO_0000322106" description="Riboflavin kinase">
    <location>
        <begin position="1"/>
        <end position="220"/>
    </location>
</feature>
<feature type="region of interest" description="H-T-H motif-like">
    <location>
        <begin position="1"/>
        <end position="92"/>
    </location>
</feature>
<feature type="region of interest" description="Riboflavin kinase">
    <location>
        <begin position="93"/>
        <end position="220"/>
    </location>
</feature>
<feature type="binding site" evidence="1">
    <location>
        <begin position="102"/>
        <end position="107"/>
    </location>
    <ligand>
        <name>CDP</name>
        <dbReference type="ChEBI" id="CHEBI:58069"/>
    </ligand>
</feature>
<feature type="binding site" evidence="1">
    <location>
        <position position="131"/>
    </location>
    <ligand>
        <name>Mg(2+)</name>
        <dbReference type="ChEBI" id="CHEBI:18420"/>
    </ligand>
</feature>
<feature type="binding site" evidence="1">
    <location>
        <position position="133"/>
    </location>
    <ligand>
        <name>Mg(2+)</name>
        <dbReference type="ChEBI" id="CHEBI:18420"/>
    </ligand>
</feature>
<feature type="binding site" evidence="1">
    <location>
        <position position="188"/>
    </location>
    <ligand>
        <name>FMN</name>
        <dbReference type="ChEBI" id="CHEBI:58210"/>
    </ligand>
</feature>
<feature type="binding site" evidence="1">
    <location>
        <position position="195"/>
    </location>
    <ligand>
        <name>FMN</name>
        <dbReference type="ChEBI" id="CHEBI:58210"/>
    </ligand>
</feature>
<feature type="binding site" evidence="1">
    <location>
        <begin position="200"/>
        <end position="203"/>
    </location>
    <ligand>
        <name>CDP</name>
        <dbReference type="ChEBI" id="CHEBI:58069"/>
    </ligand>
</feature>
<feature type="helix" evidence="3">
    <location>
        <begin position="6"/>
        <end position="18"/>
    </location>
</feature>
<feature type="helix" evidence="3">
    <location>
        <begin position="19"/>
        <end position="21"/>
    </location>
</feature>
<feature type="strand" evidence="3">
    <location>
        <begin position="22"/>
        <end position="26"/>
    </location>
</feature>
<feature type="helix" evidence="3">
    <location>
        <begin position="28"/>
        <end position="35"/>
    </location>
</feature>
<feature type="helix" evidence="3">
    <location>
        <begin position="39"/>
        <end position="51"/>
    </location>
</feature>
<feature type="strand" evidence="3">
    <location>
        <begin position="54"/>
        <end position="60"/>
    </location>
</feature>
<feature type="strand" evidence="3">
    <location>
        <begin position="63"/>
        <end position="68"/>
    </location>
</feature>
<feature type="helix" evidence="3">
    <location>
        <begin position="70"/>
        <end position="86"/>
    </location>
</feature>
<feature type="strand" evidence="3">
    <location>
        <begin position="93"/>
        <end position="100"/>
    </location>
</feature>
<feature type="helix" evidence="3">
    <location>
        <begin position="106"/>
        <end position="110"/>
    </location>
</feature>
<feature type="helix" evidence="3">
    <location>
        <begin position="113"/>
        <end position="123"/>
    </location>
</feature>
<feature type="strand" evidence="3">
    <location>
        <begin position="132"/>
        <end position="136"/>
    </location>
</feature>
<feature type="helix" evidence="3">
    <location>
        <begin position="138"/>
        <end position="140"/>
    </location>
</feature>
<feature type="helix" evidence="3">
    <location>
        <begin position="141"/>
        <end position="149"/>
    </location>
</feature>
<feature type="strand" evidence="3">
    <location>
        <begin position="153"/>
        <end position="155"/>
    </location>
</feature>
<feature type="strand" evidence="3">
    <location>
        <begin position="168"/>
        <end position="175"/>
    </location>
</feature>
<feature type="strand" evidence="3">
    <location>
        <begin position="178"/>
        <end position="187"/>
    </location>
</feature>
<feature type="strand" evidence="3">
    <location>
        <begin position="192"/>
        <end position="197"/>
    </location>
</feature>
<feature type="helix" evidence="3">
    <location>
        <begin position="202"/>
        <end position="205"/>
    </location>
</feature>
<feature type="strand" evidence="3">
    <location>
        <begin position="213"/>
        <end position="218"/>
    </location>
</feature>
<proteinExistence type="evidence at protein level"/>
<gene>
    <name type="primary">ribK</name>
    <name type="ordered locus">Ta1064</name>
</gene>
<organism>
    <name type="scientific">Thermoplasma acidophilum (strain ATCC 25905 / DSM 1728 / JCM 9062 / NBRC 15155 / AMRC-C165)</name>
    <dbReference type="NCBI Taxonomy" id="273075"/>
    <lineage>
        <taxon>Archaea</taxon>
        <taxon>Methanobacteriati</taxon>
        <taxon>Thermoplasmatota</taxon>
        <taxon>Thermoplasmata</taxon>
        <taxon>Thermoplasmatales</taxon>
        <taxon>Thermoplasmataceae</taxon>
        <taxon>Thermoplasma</taxon>
    </lineage>
</organism>
<accession>Q9HJA6</accession>